<feature type="chain" id="PRO_1000127174" description="Small ribosomal subunit protein uS10">
    <location>
        <begin position="1"/>
        <end position="102"/>
    </location>
</feature>
<proteinExistence type="inferred from homology"/>
<evidence type="ECO:0000255" key="1">
    <source>
        <dbReference type="HAMAP-Rule" id="MF_00508"/>
    </source>
</evidence>
<evidence type="ECO:0000305" key="2"/>
<name>RS10_RHOPT</name>
<gene>
    <name evidence="1" type="primary">rpsJ</name>
    <name type="ordered locus">Rpal_3668</name>
</gene>
<reference key="1">
    <citation type="submission" date="2008-05" db="EMBL/GenBank/DDBJ databases">
        <title>Complete sequence of Rhodopseudomonas palustris TIE-1.</title>
        <authorList>
            <consortium name="US DOE Joint Genome Institute"/>
            <person name="Lucas S."/>
            <person name="Copeland A."/>
            <person name="Lapidus A."/>
            <person name="Glavina del Rio T."/>
            <person name="Dalin E."/>
            <person name="Tice H."/>
            <person name="Pitluck S."/>
            <person name="Chain P."/>
            <person name="Malfatti S."/>
            <person name="Shin M."/>
            <person name="Vergez L."/>
            <person name="Lang D."/>
            <person name="Schmutz J."/>
            <person name="Larimer F."/>
            <person name="Land M."/>
            <person name="Hauser L."/>
            <person name="Kyrpides N."/>
            <person name="Mikhailova N."/>
            <person name="Emerson D."/>
            <person name="Newman D.K."/>
            <person name="Roden E."/>
            <person name="Richardson P."/>
        </authorList>
    </citation>
    <scope>NUCLEOTIDE SEQUENCE [LARGE SCALE GENOMIC DNA]</scope>
    <source>
        <strain>TIE-1</strain>
    </source>
</reference>
<organism>
    <name type="scientific">Rhodopseudomonas palustris (strain TIE-1)</name>
    <dbReference type="NCBI Taxonomy" id="395960"/>
    <lineage>
        <taxon>Bacteria</taxon>
        <taxon>Pseudomonadati</taxon>
        <taxon>Pseudomonadota</taxon>
        <taxon>Alphaproteobacteria</taxon>
        <taxon>Hyphomicrobiales</taxon>
        <taxon>Nitrobacteraceae</taxon>
        <taxon>Rhodopseudomonas</taxon>
    </lineage>
</organism>
<dbReference type="EMBL" id="CP001096">
    <property type="protein sequence ID" value="ACF02168.1"/>
    <property type="molecule type" value="Genomic_DNA"/>
</dbReference>
<dbReference type="RefSeq" id="WP_002712302.1">
    <property type="nucleotide sequence ID" value="NC_011004.1"/>
</dbReference>
<dbReference type="SMR" id="B3QBY1"/>
<dbReference type="GeneID" id="93215325"/>
<dbReference type="KEGG" id="rpt:Rpal_3668"/>
<dbReference type="HOGENOM" id="CLU_122625_1_3_5"/>
<dbReference type="OrthoDB" id="9804464at2"/>
<dbReference type="Proteomes" id="UP000001725">
    <property type="component" value="Chromosome"/>
</dbReference>
<dbReference type="GO" id="GO:1990904">
    <property type="term" value="C:ribonucleoprotein complex"/>
    <property type="evidence" value="ECO:0007669"/>
    <property type="project" value="UniProtKB-KW"/>
</dbReference>
<dbReference type="GO" id="GO:0005840">
    <property type="term" value="C:ribosome"/>
    <property type="evidence" value="ECO:0007669"/>
    <property type="project" value="UniProtKB-KW"/>
</dbReference>
<dbReference type="GO" id="GO:0003735">
    <property type="term" value="F:structural constituent of ribosome"/>
    <property type="evidence" value="ECO:0007669"/>
    <property type="project" value="InterPro"/>
</dbReference>
<dbReference type="GO" id="GO:0000049">
    <property type="term" value="F:tRNA binding"/>
    <property type="evidence" value="ECO:0007669"/>
    <property type="project" value="UniProtKB-UniRule"/>
</dbReference>
<dbReference type="GO" id="GO:0006412">
    <property type="term" value="P:translation"/>
    <property type="evidence" value="ECO:0007669"/>
    <property type="project" value="UniProtKB-UniRule"/>
</dbReference>
<dbReference type="FunFam" id="3.30.70.600:FF:000001">
    <property type="entry name" value="30S ribosomal protein S10"/>
    <property type="match status" value="1"/>
</dbReference>
<dbReference type="Gene3D" id="3.30.70.600">
    <property type="entry name" value="Ribosomal protein S10 domain"/>
    <property type="match status" value="1"/>
</dbReference>
<dbReference type="HAMAP" id="MF_00508">
    <property type="entry name" value="Ribosomal_uS10"/>
    <property type="match status" value="1"/>
</dbReference>
<dbReference type="InterPro" id="IPR001848">
    <property type="entry name" value="Ribosomal_uS10"/>
</dbReference>
<dbReference type="InterPro" id="IPR018268">
    <property type="entry name" value="Ribosomal_uS10_CS"/>
</dbReference>
<dbReference type="InterPro" id="IPR027486">
    <property type="entry name" value="Ribosomal_uS10_dom"/>
</dbReference>
<dbReference type="InterPro" id="IPR036838">
    <property type="entry name" value="Ribosomal_uS10_dom_sf"/>
</dbReference>
<dbReference type="NCBIfam" id="NF001861">
    <property type="entry name" value="PRK00596.1"/>
    <property type="match status" value="1"/>
</dbReference>
<dbReference type="NCBIfam" id="TIGR01049">
    <property type="entry name" value="rpsJ_bact"/>
    <property type="match status" value="1"/>
</dbReference>
<dbReference type="PANTHER" id="PTHR11700">
    <property type="entry name" value="30S RIBOSOMAL PROTEIN S10 FAMILY MEMBER"/>
    <property type="match status" value="1"/>
</dbReference>
<dbReference type="Pfam" id="PF00338">
    <property type="entry name" value="Ribosomal_S10"/>
    <property type="match status" value="1"/>
</dbReference>
<dbReference type="PRINTS" id="PR00971">
    <property type="entry name" value="RIBOSOMALS10"/>
</dbReference>
<dbReference type="SMART" id="SM01403">
    <property type="entry name" value="Ribosomal_S10"/>
    <property type="match status" value="1"/>
</dbReference>
<dbReference type="SUPFAM" id="SSF54999">
    <property type="entry name" value="Ribosomal protein S10"/>
    <property type="match status" value="1"/>
</dbReference>
<dbReference type="PROSITE" id="PS00361">
    <property type="entry name" value="RIBOSOMAL_S10"/>
    <property type="match status" value="1"/>
</dbReference>
<comment type="function">
    <text evidence="1">Involved in the binding of tRNA to the ribosomes.</text>
</comment>
<comment type="subunit">
    <text evidence="1">Part of the 30S ribosomal subunit.</text>
</comment>
<comment type="similarity">
    <text evidence="1">Belongs to the universal ribosomal protein uS10 family.</text>
</comment>
<accession>B3QBY1</accession>
<protein>
    <recommendedName>
        <fullName evidence="1">Small ribosomal subunit protein uS10</fullName>
    </recommendedName>
    <alternativeName>
        <fullName evidence="2">30S ribosomal protein S10</fullName>
    </alternativeName>
</protein>
<keyword id="KW-0687">Ribonucleoprotein</keyword>
<keyword id="KW-0689">Ribosomal protein</keyword>
<sequence length="102" mass="11669">MNGQNIRIRLKAFDHRILDTSTREIVNTAKRTGAQVRGPIPLPTRIEKFTVNRSPHVDKKSREQFEMRTHKRLLDIVDPTPQTVDALMKLDLAAGVDVEIKL</sequence>